<accession>B7L6X1</accession>
<comment type="catalytic activity">
    <reaction evidence="1">
        <text>tRNA(Gly) + glycine + ATP = glycyl-tRNA(Gly) + AMP + diphosphate</text>
        <dbReference type="Rhea" id="RHEA:16013"/>
        <dbReference type="Rhea" id="RHEA-COMP:9664"/>
        <dbReference type="Rhea" id="RHEA-COMP:9683"/>
        <dbReference type="ChEBI" id="CHEBI:30616"/>
        <dbReference type="ChEBI" id="CHEBI:33019"/>
        <dbReference type="ChEBI" id="CHEBI:57305"/>
        <dbReference type="ChEBI" id="CHEBI:78442"/>
        <dbReference type="ChEBI" id="CHEBI:78522"/>
        <dbReference type="ChEBI" id="CHEBI:456215"/>
        <dbReference type="EC" id="6.1.1.14"/>
    </reaction>
</comment>
<comment type="subunit">
    <text evidence="1">Tetramer of two alpha and two beta subunits.</text>
</comment>
<comment type="subcellular location">
    <subcellularLocation>
        <location evidence="1">Cytoplasm</location>
    </subcellularLocation>
</comment>
<comment type="similarity">
    <text evidence="1">Belongs to the class-II aminoacyl-tRNA synthetase family.</text>
</comment>
<evidence type="ECO:0000255" key="1">
    <source>
        <dbReference type="HAMAP-Rule" id="MF_00254"/>
    </source>
</evidence>
<sequence>MQKFDTRTFQGLILTLQDYWARQGCTIVQPLDMEVGAGTSHPMTCLRALGPEPMAAAYVQPSRRPTDGRYGENPNRLQHYYQFQVVIKPSPDNIQELYLGSLKELGMDPTIHDIRFVEDNWENPTLGAWGLGWEVWLNGMEVTQFTYFQQVGGLECKPVTGEITYGLERLAMYIQGVDSVYDLVWSDGPLGKTTYGDVFHQNEVEQSTYNFEYADVDFLFTCFEQYEKEAQQLLALENPLPLPAYERILKAAHSFNLLDARKAISVTERQRYILRIRTLTKAVAEAYYASREALGFPMCNKDK</sequence>
<protein>
    <recommendedName>
        <fullName evidence="1">Glycine--tRNA ligase alpha subunit</fullName>
        <ecNumber evidence="1">6.1.1.14</ecNumber>
    </recommendedName>
    <alternativeName>
        <fullName evidence="1">Glycyl-tRNA synthetase alpha subunit</fullName>
        <shortName evidence="1">GlyRS</shortName>
    </alternativeName>
</protein>
<keyword id="KW-0030">Aminoacyl-tRNA synthetase</keyword>
<keyword id="KW-0067">ATP-binding</keyword>
<keyword id="KW-0963">Cytoplasm</keyword>
<keyword id="KW-0436">Ligase</keyword>
<keyword id="KW-0547">Nucleotide-binding</keyword>
<keyword id="KW-0648">Protein biosynthesis</keyword>
<keyword id="KW-1185">Reference proteome</keyword>
<organism>
    <name type="scientific">Escherichia coli (strain 55989 / EAEC)</name>
    <dbReference type="NCBI Taxonomy" id="585055"/>
    <lineage>
        <taxon>Bacteria</taxon>
        <taxon>Pseudomonadati</taxon>
        <taxon>Pseudomonadota</taxon>
        <taxon>Gammaproteobacteria</taxon>
        <taxon>Enterobacterales</taxon>
        <taxon>Enterobacteriaceae</taxon>
        <taxon>Escherichia</taxon>
    </lineage>
</organism>
<proteinExistence type="inferred from homology"/>
<gene>
    <name evidence="1" type="primary">glyQ</name>
    <name type="ordered locus">EC55989_4014</name>
</gene>
<feature type="chain" id="PRO_1000125548" description="Glycine--tRNA ligase alpha subunit">
    <location>
        <begin position="1"/>
        <end position="303"/>
    </location>
</feature>
<reference key="1">
    <citation type="journal article" date="2009" name="PLoS Genet.">
        <title>Organised genome dynamics in the Escherichia coli species results in highly diverse adaptive paths.</title>
        <authorList>
            <person name="Touchon M."/>
            <person name="Hoede C."/>
            <person name="Tenaillon O."/>
            <person name="Barbe V."/>
            <person name="Baeriswyl S."/>
            <person name="Bidet P."/>
            <person name="Bingen E."/>
            <person name="Bonacorsi S."/>
            <person name="Bouchier C."/>
            <person name="Bouvet O."/>
            <person name="Calteau A."/>
            <person name="Chiapello H."/>
            <person name="Clermont O."/>
            <person name="Cruveiller S."/>
            <person name="Danchin A."/>
            <person name="Diard M."/>
            <person name="Dossat C."/>
            <person name="Karoui M.E."/>
            <person name="Frapy E."/>
            <person name="Garry L."/>
            <person name="Ghigo J.M."/>
            <person name="Gilles A.M."/>
            <person name="Johnson J."/>
            <person name="Le Bouguenec C."/>
            <person name="Lescat M."/>
            <person name="Mangenot S."/>
            <person name="Martinez-Jehanne V."/>
            <person name="Matic I."/>
            <person name="Nassif X."/>
            <person name="Oztas S."/>
            <person name="Petit M.A."/>
            <person name="Pichon C."/>
            <person name="Rouy Z."/>
            <person name="Ruf C.S."/>
            <person name="Schneider D."/>
            <person name="Tourret J."/>
            <person name="Vacherie B."/>
            <person name="Vallenet D."/>
            <person name="Medigue C."/>
            <person name="Rocha E.P.C."/>
            <person name="Denamur E."/>
        </authorList>
    </citation>
    <scope>NUCLEOTIDE SEQUENCE [LARGE SCALE GENOMIC DNA]</scope>
    <source>
        <strain>55989 / EAEC</strain>
    </source>
</reference>
<dbReference type="EC" id="6.1.1.14" evidence="1"/>
<dbReference type="EMBL" id="CU928145">
    <property type="protein sequence ID" value="CAV00499.1"/>
    <property type="molecule type" value="Genomic_DNA"/>
</dbReference>
<dbReference type="RefSeq" id="WP_001168544.1">
    <property type="nucleotide sequence ID" value="NZ_CP028304.1"/>
</dbReference>
<dbReference type="SMR" id="B7L6X1"/>
<dbReference type="GeneID" id="93778290"/>
<dbReference type="KEGG" id="eck:EC55989_4014"/>
<dbReference type="HOGENOM" id="CLU_057066_1_0_6"/>
<dbReference type="Proteomes" id="UP000000746">
    <property type="component" value="Chromosome"/>
</dbReference>
<dbReference type="GO" id="GO:0005829">
    <property type="term" value="C:cytosol"/>
    <property type="evidence" value="ECO:0007669"/>
    <property type="project" value="TreeGrafter"/>
</dbReference>
<dbReference type="GO" id="GO:0005524">
    <property type="term" value="F:ATP binding"/>
    <property type="evidence" value="ECO:0007669"/>
    <property type="project" value="UniProtKB-UniRule"/>
</dbReference>
<dbReference type="GO" id="GO:0004820">
    <property type="term" value="F:glycine-tRNA ligase activity"/>
    <property type="evidence" value="ECO:0007669"/>
    <property type="project" value="UniProtKB-UniRule"/>
</dbReference>
<dbReference type="GO" id="GO:0006426">
    <property type="term" value="P:glycyl-tRNA aminoacylation"/>
    <property type="evidence" value="ECO:0007669"/>
    <property type="project" value="UniProtKB-UniRule"/>
</dbReference>
<dbReference type="CDD" id="cd00733">
    <property type="entry name" value="GlyRS_alpha_core"/>
    <property type="match status" value="1"/>
</dbReference>
<dbReference type="FunFam" id="1.20.58.180:FF:000001">
    <property type="entry name" value="Glycine--tRNA ligase alpha subunit"/>
    <property type="match status" value="1"/>
</dbReference>
<dbReference type="FunFam" id="3.30.930.10:FF:000006">
    <property type="entry name" value="Glycine--tRNA ligase alpha subunit"/>
    <property type="match status" value="1"/>
</dbReference>
<dbReference type="Gene3D" id="3.30.930.10">
    <property type="entry name" value="Bira Bifunctional Protein, Domain 2"/>
    <property type="match status" value="1"/>
</dbReference>
<dbReference type="Gene3D" id="1.20.58.180">
    <property type="entry name" value="Class II aaRS and biotin synthetases, domain 2"/>
    <property type="match status" value="1"/>
</dbReference>
<dbReference type="HAMAP" id="MF_00254">
    <property type="entry name" value="Gly_tRNA_synth_alpha"/>
    <property type="match status" value="1"/>
</dbReference>
<dbReference type="InterPro" id="IPR045864">
    <property type="entry name" value="aa-tRNA-synth_II/BPL/LPL"/>
</dbReference>
<dbReference type="InterPro" id="IPR006194">
    <property type="entry name" value="Gly-tRNA-synth_heterodimer"/>
</dbReference>
<dbReference type="InterPro" id="IPR002310">
    <property type="entry name" value="Gly-tRNA_ligase_asu"/>
</dbReference>
<dbReference type="NCBIfam" id="TIGR00388">
    <property type="entry name" value="glyQ"/>
    <property type="match status" value="1"/>
</dbReference>
<dbReference type="NCBIfam" id="NF006827">
    <property type="entry name" value="PRK09348.1"/>
    <property type="match status" value="1"/>
</dbReference>
<dbReference type="PANTHER" id="PTHR30075:SF2">
    <property type="entry name" value="GLYCINE--TRNA LIGASE, CHLOROPLASTIC_MITOCHONDRIAL 2"/>
    <property type="match status" value="1"/>
</dbReference>
<dbReference type="PANTHER" id="PTHR30075">
    <property type="entry name" value="GLYCYL-TRNA SYNTHETASE"/>
    <property type="match status" value="1"/>
</dbReference>
<dbReference type="Pfam" id="PF02091">
    <property type="entry name" value="tRNA-synt_2e"/>
    <property type="match status" value="1"/>
</dbReference>
<dbReference type="PRINTS" id="PR01044">
    <property type="entry name" value="TRNASYNTHGA"/>
</dbReference>
<dbReference type="SUPFAM" id="SSF55681">
    <property type="entry name" value="Class II aaRS and biotin synthetases"/>
    <property type="match status" value="1"/>
</dbReference>
<dbReference type="PROSITE" id="PS50861">
    <property type="entry name" value="AA_TRNA_LIGASE_II_GLYAB"/>
    <property type="match status" value="1"/>
</dbReference>
<name>SYGA_ECO55</name>